<keyword id="KW-0678">Repressor</keyword>
<keyword id="KW-0687">Ribonucleoprotein</keyword>
<keyword id="KW-0689">Ribosomal protein</keyword>
<keyword id="KW-0694">RNA-binding</keyword>
<keyword id="KW-0699">rRNA-binding</keyword>
<keyword id="KW-0810">Translation regulation</keyword>
<keyword id="KW-0820">tRNA-binding</keyword>
<proteinExistence type="inferred from homology"/>
<gene>
    <name evidence="1" type="primary">rplA</name>
    <name type="ordered locus">CCA_00694</name>
</gene>
<dbReference type="EMBL" id="AE015925">
    <property type="protein sequence ID" value="AAP05436.1"/>
    <property type="molecule type" value="Genomic_DNA"/>
</dbReference>
<dbReference type="RefSeq" id="WP_011006651.1">
    <property type="nucleotide sequence ID" value="NC_003361.3"/>
</dbReference>
<dbReference type="SMR" id="Q822I8"/>
<dbReference type="STRING" id="227941.CCA_00694"/>
<dbReference type="KEGG" id="cca:CCA_00694"/>
<dbReference type="eggNOG" id="COG0081">
    <property type="taxonomic scope" value="Bacteria"/>
</dbReference>
<dbReference type="HOGENOM" id="CLU_062853_0_0_0"/>
<dbReference type="OrthoDB" id="9803740at2"/>
<dbReference type="Proteomes" id="UP000002193">
    <property type="component" value="Chromosome"/>
</dbReference>
<dbReference type="GO" id="GO:0015934">
    <property type="term" value="C:large ribosomal subunit"/>
    <property type="evidence" value="ECO:0007669"/>
    <property type="project" value="InterPro"/>
</dbReference>
<dbReference type="GO" id="GO:0019843">
    <property type="term" value="F:rRNA binding"/>
    <property type="evidence" value="ECO:0007669"/>
    <property type="project" value="UniProtKB-UniRule"/>
</dbReference>
<dbReference type="GO" id="GO:0003735">
    <property type="term" value="F:structural constituent of ribosome"/>
    <property type="evidence" value="ECO:0007669"/>
    <property type="project" value="InterPro"/>
</dbReference>
<dbReference type="GO" id="GO:0000049">
    <property type="term" value="F:tRNA binding"/>
    <property type="evidence" value="ECO:0007669"/>
    <property type="project" value="UniProtKB-KW"/>
</dbReference>
<dbReference type="GO" id="GO:0006417">
    <property type="term" value="P:regulation of translation"/>
    <property type="evidence" value="ECO:0007669"/>
    <property type="project" value="UniProtKB-KW"/>
</dbReference>
<dbReference type="GO" id="GO:0006412">
    <property type="term" value="P:translation"/>
    <property type="evidence" value="ECO:0007669"/>
    <property type="project" value="UniProtKB-UniRule"/>
</dbReference>
<dbReference type="CDD" id="cd00403">
    <property type="entry name" value="Ribosomal_L1"/>
    <property type="match status" value="1"/>
</dbReference>
<dbReference type="FunFam" id="3.40.50.790:FF:000001">
    <property type="entry name" value="50S ribosomal protein L1"/>
    <property type="match status" value="1"/>
</dbReference>
<dbReference type="Gene3D" id="3.30.190.20">
    <property type="match status" value="1"/>
</dbReference>
<dbReference type="Gene3D" id="3.40.50.790">
    <property type="match status" value="1"/>
</dbReference>
<dbReference type="HAMAP" id="MF_01318_B">
    <property type="entry name" value="Ribosomal_uL1_B"/>
    <property type="match status" value="1"/>
</dbReference>
<dbReference type="InterPro" id="IPR005878">
    <property type="entry name" value="Ribosom_uL1_bac-type"/>
</dbReference>
<dbReference type="InterPro" id="IPR002143">
    <property type="entry name" value="Ribosomal_uL1"/>
</dbReference>
<dbReference type="InterPro" id="IPR023674">
    <property type="entry name" value="Ribosomal_uL1-like"/>
</dbReference>
<dbReference type="InterPro" id="IPR028364">
    <property type="entry name" value="Ribosomal_uL1/biogenesis"/>
</dbReference>
<dbReference type="InterPro" id="IPR016095">
    <property type="entry name" value="Ribosomal_uL1_3-a/b-sand"/>
</dbReference>
<dbReference type="InterPro" id="IPR023673">
    <property type="entry name" value="Ribosomal_uL1_CS"/>
</dbReference>
<dbReference type="NCBIfam" id="TIGR01169">
    <property type="entry name" value="rplA_bact"/>
    <property type="match status" value="1"/>
</dbReference>
<dbReference type="PANTHER" id="PTHR36427">
    <property type="entry name" value="54S RIBOSOMAL PROTEIN L1, MITOCHONDRIAL"/>
    <property type="match status" value="1"/>
</dbReference>
<dbReference type="PANTHER" id="PTHR36427:SF3">
    <property type="entry name" value="LARGE RIBOSOMAL SUBUNIT PROTEIN UL1M"/>
    <property type="match status" value="1"/>
</dbReference>
<dbReference type="Pfam" id="PF00687">
    <property type="entry name" value="Ribosomal_L1"/>
    <property type="match status" value="1"/>
</dbReference>
<dbReference type="PIRSF" id="PIRSF002155">
    <property type="entry name" value="Ribosomal_L1"/>
    <property type="match status" value="1"/>
</dbReference>
<dbReference type="SUPFAM" id="SSF56808">
    <property type="entry name" value="Ribosomal protein L1"/>
    <property type="match status" value="1"/>
</dbReference>
<dbReference type="PROSITE" id="PS01199">
    <property type="entry name" value="RIBOSOMAL_L1"/>
    <property type="match status" value="1"/>
</dbReference>
<organism>
    <name type="scientific">Chlamydia caviae (strain ATCC VR-813 / DSM 19441 / 03DC25 / GPIC)</name>
    <name type="common">Chlamydophila caviae</name>
    <dbReference type="NCBI Taxonomy" id="227941"/>
    <lineage>
        <taxon>Bacteria</taxon>
        <taxon>Pseudomonadati</taxon>
        <taxon>Chlamydiota</taxon>
        <taxon>Chlamydiia</taxon>
        <taxon>Chlamydiales</taxon>
        <taxon>Chlamydiaceae</taxon>
        <taxon>Chlamydia/Chlamydophila group</taxon>
        <taxon>Chlamydia</taxon>
    </lineage>
</organism>
<evidence type="ECO:0000255" key="1">
    <source>
        <dbReference type="HAMAP-Rule" id="MF_01318"/>
    </source>
</evidence>
<evidence type="ECO:0000305" key="2"/>
<comment type="function">
    <text evidence="1">Binds directly to 23S rRNA. The L1 stalk is quite mobile in the ribosome, and is involved in E site tRNA release.</text>
</comment>
<comment type="function">
    <text evidence="1">Protein L1 is also a translational repressor protein, it controls the translation of the L11 operon by binding to its mRNA.</text>
</comment>
<comment type="subunit">
    <text evidence="1">Part of the 50S ribosomal subunit.</text>
</comment>
<comment type="similarity">
    <text evidence="1">Belongs to the universal ribosomal protein uL1 family.</text>
</comment>
<accession>Q822I8</accession>
<feature type="chain" id="PRO_0000125638" description="Large ribosomal subunit protein uL1">
    <location>
        <begin position="1"/>
        <end position="232"/>
    </location>
</feature>
<reference key="1">
    <citation type="journal article" date="2003" name="Nucleic Acids Res.">
        <title>Genome sequence of Chlamydophila caviae (Chlamydia psittaci GPIC): examining the role of niche-specific genes in the evolution of the Chlamydiaceae.</title>
        <authorList>
            <person name="Read T.D."/>
            <person name="Myers G.S.A."/>
            <person name="Brunham R.C."/>
            <person name="Nelson W.C."/>
            <person name="Paulsen I.T."/>
            <person name="Heidelberg J.F."/>
            <person name="Holtzapple E.K."/>
            <person name="Khouri H.M."/>
            <person name="Federova N.B."/>
            <person name="Carty H.A."/>
            <person name="Umayam L.A."/>
            <person name="Haft D.H."/>
            <person name="Peterson J.D."/>
            <person name="Beanan M.J."/>
            <person name="White O."/>
            <person name="Salzberg S.L."/>
            <person name="Hsia R.-C."/>
            <person name="McClarty G."/>
            <person name="Rank R.G."/>
            <person name="Bavoil P.M."/>
            <person name="Fraser C.M."/>
        </authorList>
    </citation>
    <scope>NUCLEOTIDE SEQUENCE [LARGE SCALE GENOMIC DNA]</scope>
    <source>
        <strain>ATCC VR-813 / DSM 19441 / 03DC25 / GPIC</strain>
    </source>
</reference>
<protein>
    <recommendedName>
        <fullName evidence="1">Large ribosomal subunit protein uL1</fullName>
    </recommendedName>
    <alternativeName>
        <fullName evidence="2">50S ribosomal protein L1</fullName>
    </alternativeName>
</protein>
<name>RL1_CHLCV</name>
<sequence>MTKHGKRIRGILKSYDFSKSYSLQEAIDILKQCPTVRFDQTVDVSIKLGIDPKKSDQQIRGSVSLPNGTGKTLKILVFAAGEKAKEALDAGADFVGSDDLVERIKGGWVDFDVAVATPDMMREVGKLGKVLGPRNLMPTPKAGTVTMDVTKAIAELRKGKIEFKADRAGVCNAGVGKLSFDRNLLKENIEALCSALIKAKPPAAKGQYLVSFTVSSTMGPGISVDTRELMAS</sequence>